<feature type="chain" id="PRO_1000005714" description="Arginine deiminase">
    <location>
        <begin position="1"/>
        <end position="413"/>
    </location>
</feature>
<feature type="active site" description="Amidino-cysteine intermediate" evidence="1">
    <location>
        <position position="403"/>
    </location>
</feature>
<organism>
    <name type="scientific">Clostridium perfringens (strain SM101 / Type A)</name>
    <dbReference type="NCBI Taxonomy" id="289380"/>
    <lineage>
        <taxon>Bacteria</taxon>
        <taxon>Bacillati</taxon>
        <taxon>Bacillota</taxon>
        <taxon>Clostridia</taxon>
        <taxon>Eubacteriales</taxon>
        <taxon>Clostridiaceae</taxon>
        <taxon>Clostridium</taxon>
    </lineage>
</organism>
<gene>
    <name evidence="1" type="primary">arcA</name>
    <name type="ordered locus">CPR_0157</name>
</gene>
<name>ARCA_CLOPS</name>
<reference key="1">
    <citation type="journal article" date="2006" name="Genome Res.">
        <title>Skewed genomic variability in strains of the toxigenic bacterial pathogen, Clostridium perfringens.</title>
        <authorList>
            <person name="Myers G.S.A."/>
            <person name="Rasko D.A."/>
            <person name="Cheung J.K."/>
            <person name="Ravel J."/>
            <person name="Seshadri R."/>
            <person name="DeBoy R.T."/>
            <person name="Ren Q."/>
            <person name="Varga J."/>
            <person name="Awad M.M."/>
            <person name="Brinkac L.M."/>
            <person name="Daugherty S.C."/>
            <person name="Haft D.H."/>
            <person name="Dodson R.J."/>
            <person name="Madupu R."/>
            <person name="Nelson W.C."/>
            <person name="Rosovitz M.J."/>
            <person name="Sullivan S.A."/>
            <person name="Khouri H."/>
            <person name="Dimitrov G.I."/>
            <person name="Watkins K.L."/>
            <person name="Mulligan S."/>
            <person name="Benton J."/>
            <person name="Radune D."/>
            <person name="Fisher D.J."/>
            <person name="Atkins H.S."/>
            <person name="Hiscox T."/>
            <person name="Jost B.H."/>
            <person name="Billington S.J."/>
            <person name="Songer J.G."/>
            <person name="McClane B.A."/>
            <person name="Titball R.W."/>
            <person name="Rood J.I."/>
            <person name="Melville S.B."/>
            <person name="Paulsen I.T."/>
        </authorList>
    </citation>
    <scope>NUCLEOTIDE SEQUENCE [LARGE SCALE GENOMIC DNA]</scope>
    <source>
        <strain>SM101 / Type A</strain>
    </source>
</reference>
<proteinExistence type="inferred from homology"/>
<evidence type="ECO:0000255" key="1">
    <source>
        <dbReference type="HAMAP-Rule" id="MF_00242"/>
    </source>
</evidence>
<dbReference type="EC" id="3.5.3.6" evidence="1"/>
<dbReference type="EMBL" id="CP000312">
    <property type="protein sequence ID" value="ABG87611.1"/>
    <property type="molecule type" value="Genomic_DNA"/>
</dbReference>
<dbReference type="RefSeq" id="WP_011591310.1">
    <property type="nucleotide sequence ID" value="NC_008262.1"/>
</dbReference>
<dbReference type="SMR" id="Q0SWK6"/>
<dbReference type="KEGG" id="cpr:CPR_0157"/>
<dbReference type="UniPathway" id="UPA00254">
    <property type="reaction ID" value="UER00364"/>
</dbReference>
<dbReference type="Proteomes" id="UP000001824">
    <property type="component" value="Chromosome"/>
</dbReference>
<dbReference type="GO" id="GO:0005737">
    <property type="term" value="C:cytoplasm"/>
    <property type="evidence" value="ECO:0007669"/>
    <property type="project" value="UniProtKB-SubCell"/>
</dbReference>
<dbReference type="GO" id="GO:0016990">
    <property type="term" value="F:arginine deiminase activity"/>
    <property type="evidence" value="ECO:0007669"/>
    <property type="project" value="UniProtKB-UniRule"/>
</dbReference>
<dbReference type="GO" id="GO:0019547">
    <property type="term" value="P:arginine catabolic process to ornithine"/>
    <property type="evidence" value="ECO:0007669"/>
    <property type="project" value="UniProtKB-UniRule"/>
</dbReference>
<dbReference type="GO" id="GO:0019546">
    <property type="term" value="P:arginine deiminase pathway"/>
    <property type="evidence" value="ECO:0007669"/>
    <property type="project" value="TreeGrafter"/>
</dbReference>
<dbReference type="Gene3D" id="1.10.3930.10">
    <property type="entry name" value="Arginine deiminase"/>
    <property type="match status" value="1"/>
</dbReference>
<dbReference type="Gene3D" id="3.75.10.10">
    <property type="entry name" value="L-arginine/glycine Amidinotransferase, Chain A"/>
    <property type="match status" value="1"/>
</dbReference>
<dbReference type="HAMAP" id="MF_00242">
    <property type="entry name" value="Arg_deiminase"/>
    <property type="match status" value="1"/>
</dbReference>
<dbReference type="InterPro" id="IPR003876">
    <property type="entry name" value="Arg_deiminase"/>
</dbReference>
<dbReference type="NCBIfam" id="TIGR01078">
    <property type="entry name" value="arcA"/>
    <property type="match status" value="1"/>
</dbReference>
<dbReference type="NCBIfam" id="NF002381">
    <property type="entry name" value="PRK01388.1"/>
    <property type="match status" value="1"/>
</dbReference>
<dbReference type="PANTHER" id="PTHR47271">
    <property type="entry name" value="ARGININE DEIMINASE"/>
    <property type="match status" value="1"/>
</dbReference>
<dbReference type="PANTHER" id="PTHR47271:SF2">
    <property type="entry name" value="ARGININE DEIMINASE"/>
    <property type="match status" value="1"/>
</dbReference>
<dbReference type="Pfam" id="PF02274">
    <property type="entry name" value="ADI"/>
    <property type="match status" value="1"/>
</dbReference>
<dbReference type="PIRSF" id="PIRSF006356">
    <property type="entry name" value="Arg_deiminase"/>
    <property type="match status" value="1"/>
</dbReference>
<dbReference type="PRINTS" id="PR01466">
    <property type="entry name" value="ARGDEIMINASE"/>
</dbReference>
<dbReference type="SUPFAM" id="SSF55909">
    <property type="entry name" value="Pentein"/>
    <property type="match status" value="1"/>
</dbReference>
<protein>
    <recommendedName>
        <fullName evidence="1">Arginine deiminase</fullName>
        <shortName evidence="1">ADI</shortName>
        <ecNumber evidence="1">3.5.3.6</ecNumber>
    </recommendedName>
    <alternativeName>
        <fullName evidence="1">Arginine dihydrolase</fullName>
        <shortName evidence="1">AD</shortName>
    </alternativeName>
</protein>
<accession>Q0SWK6</accession>
<comment type="catalytic activity">
    <reaction evidence="1">
        <text>L-arginine + H2O = L-citrulline + NH4(+)</text>
        <dbReference type="Rhea" id="RHEA:19597"/>
        <dbReference type="ChEBI" id="CHEBI:15377"/>
        <dbReference type="ChEBI" id="CHEBI:28938"/>
        <dbReference type="ChEBI" id="CHEBI:32682"/>
        <dbReference type="ChEBI" id="CHEBI:57743"/>
        <dbReference type="EC" id="3.5.3.6"/>
    </reaction>
</comment>
<comment type="pathway">
    <text evidence="1">Amino-acid degradation; L-arginine degradation via ADI pathway; carbamoyl phosphate from L-arginine: step 1/2.</text>
</comment>
<comment type="subcellular location">
    <subcellularLocation>
        <location evidence="1">Cytoplasm</location>
    </subcellularLocation>
</comment>
<comment type="similarity">
    <text evidence="1">Belongs to the arginine deiminase family.</text>
</comment>
<keyword id="KW-0056">Arginine metabolism</keyword>
<keyword id="KW-0963">Cytoplasm</keyword>
<keyword id="KW-0378">Hydrolase</keyword>
<sequence>MRDDRALNVTSEIGRLKTVLLHRPGEEIENLTPDLLDRLLFDDIPYLKVAREEHDAFAQTLREAGVEVLYLEVLAAEAIETSDEVKQQFISEFIDEAGVESERLKEALIEYFNSFSDNKSMVDKMMAGVRKEELKDYHRESLYDQVNNVYPFVCDPMPNLYFTRDPFATIGHGITLNHMRTDTRNRETIFAKYIFRHHPRFEGKDVPFWFNRDEKTSLEGGDELILSKEVLAVGISQRTDSASVEKLARKLLYYPDTSFKTVLAFKIPVSRAFMHLDTVFTQVDYDKFTVHPGIVGPLEVYAITKDPEKDVQLIAVEECDTLENILKKYLKRDIELIKCGGGDEIIAAREQWNDGSNTLAIAPGEVVVYSRNYVTNEILEKKGIKLHVIPSSELSRGRGGPRCMSMPLIREDL</sequence>